<reference key="1">
    <citation type="submission" date="2009-07" db="EMBL/GenBank/DDBJ databases">
        <title>Complete sequence of Pectobacterium carotovorum subsp. carotovorum PC1.</title>
        <authorList>
            <consortium name="US DOE Joint Genome Institute"/>
            <person name="Lucas S."/>
            <person name="Copeland A."/>
            <person name="Lapidus A."/>
            <person name="Glavina del Rio T."/>
            <person name="Tice H."/>
            <person name="Bruce D."/>
            <person name="Goodwin L."/>
            <person name="Pitluck S."/>
            <person name="Munk A.C."/>
            <person name="Brettin T."/>
            <person name="Detter J.C."/>
            <person name="Han C."/>
            <person name="Tapia R."/>
            <person name="Larimer F."/>
            <person name="Land M."/>
            <person name="Hauser L."/>
            <person name="Kyrpides N."/>
            <person name="Mikhailova N."/>
            <person name="Balakrishnan V."/>
            <person name="Glasner J."/>
            <person name="Perna N.T."/>
        </authorList>
    </citation>
    <scope>NUCLEOTIDE SEQUENCE [LARGE SCALE GENOMIC DNA]</scope>
    <source>
        <strain>PC1</strain>
    </source>
</reference>
<accession>C6DG20</accession>
<organism>
    <name type="scientific">Pectobacterium carotovorum subsp. carotovorum (strain PC1)</name>
    <dbReference type="NCBI Taxonomy" id="561230"/>
    <lineage>
        <taxon>Bacteria</taxon>
        <taxon>Pseudomonadati</taxon>
        <taxon>Pseudomonadota</taxon>
        <taxon>Gammaproteobacteria</taxon>
        <taxon>Enterobacterales</taxon>
        <taxon>Pectobacteriaceae</taxon>
        <taxon>Pectobacterium</taxon>
    </lineage>
</organism>
<keyword id="KW-0997">Cell inner membrane</keyword>
<keyword id="KW-1003">Cell membrane</keyword>
<keyword id="KW-0406">Ion transport</keyword>
<keyword id="KW-0464">Manganese</keyword>
<keyword id="KW-0472">Membrane</keyword>
<keyword id="KW-0812">Transmembrane</keyword>
<keyword id="KW-1133">Transmembrane helix</keyword>
<keyword id="KW-0813">Transport</keyword>
<dbReference type="EMBL" id="CP001657">
    <property type="protein sequence ID" value="ACT12963.1"/>
    <property type="molecule type" value="Genomic_DNA"/>
</dbReference>
<dbReference type="RefSeq" id="WP_015840159.1">
    <property type="nucleotide sequence ID" value="NC_012917.1"/>
</dbReference>
<dbReference type="GeneID" id="67793921"/>
<dbReference type="KEGG" id="pct:PC1_1922"/>
<dbReference type="eggNOG" id="COG1971">
    <property type="taxonomic scope" value="Bacteria"/>
</dbReference>
<dbReference type="HOGENOM" id="CLU_096410_0_0_6"/>
<dbReference type="OrthoDB" id="9811590at2"/>
<dbReference type="Proteomes" id="UP000002736">
    <property type="component" value="Chromosome"/>
</dbReference>
<dbReference type="GO" id="GO:0005886">
    <property type="term" value="C:plasma membrane"/>
    <property type="evidence" value="ECO:0007669"/>
    <property type="project" value="UniProtKB-SubCell"/>
</dbReference>
<dbReference type="GO" id="GO:0005384">
    <property type="term" value="F:manganese ion transmembrane transporter activity"/>
    <property type="evidence" value="ECO:0007669"/>
    <property type="project" value="UniProtKB-UniRule"/>
</dbReference>
<dbReference type="HAMAP" id="MF_01521">
    <property type="entry name" value="MntP_pump"/>
    <property type="match status" value="1"/>
</dbReference>
<dbReference type="InterPro" id="IPR003810">
    <property type="entry name" value="Mntp/YtaF"/>
</dbReference>
<dbReference type="InterPro" id="IPR022929">
    <property type="entry name" value="Put_MntP"/>
</dbReference>
<dbReference type="NCBIfam" id="NF008546">
    <property type="entry name" value="PRK11469.1"/>
    <property type="match status" value="1"/>
</dbReference>
<dbReference type="PANTHER" id="PTHR35529">
    <property type="entry name" value="MANGANESE EFFLUX PUMP MNTP-RELATED"/>
    <property type="match status" value="1"/>
</dbReference>
<dbReference type="PANTHER" id="PTHR35529:SF1">
    <property type="entry name" value="MANGANESE EFFLUX PUMP MNTP-RELATED"/>
    <property type="match status" value="1"/>
</dbReference>
<dbReference type="Pfam" id="PF02659">
    <property type="entry name" value="Mntp"/>
    <property type="match status" value="1"/>
</dbReference>
<proteinExistence type="inferred from homology"/>
<evidence type="ECO:0000255" key="1">
    <source>
        <dbReference type="HAMAP-Rule" id="MF_01521"/>
    </source>
</evidence>
<gene>
    <name evidence="1" type="primary">mntP</name>
    <name type="ordered locus">PC1_1922</name>
</gene>
<protein>
    <recommendedName>
        <fullName evidence="1">Putative manganese efflux pump MntP</fullName>
    </recommendedName>
</protein>
<feature type="chain" id="PRO_1000215373" description="Putative manganese efflux pump MntP">
    <location>
        <begin position="1"/>
        <end position="190"/>
    </location>
</feature>
<feature type="transmembrane region" description="Helical" evidence="1">
    <location>
        <begin position="3"/>
        <end position="23"/>
    </location>
</feature>
<feature type="transmembrane region" description="Helical" evidence="1">
    <location>
        <begin position="41"/>
        <end position="61"/>
    </location>
</feature>
<feature type="transmembrane region" description="Helical" evidence="1">
    <location>
        <begin position="62"/>
        <end position="82"/>
    </location>
</feature>
<feature type="transmembrane region" description="Helical" evidence="1">
    <location>
        <begin position="105"/>
        <end position="127"/>
    </location>
</feature>
<feature type="transmembrane region" description="Helical" evidence="1">
    <location>
        <begin position="143"/>
        <end position="163"/>
    </location>
</feature>
<feature type="transmembrane region" description="Helical" evidence="1">
    <location>
        <begin position="168"/>
        <end position="188"/>
    </location>
</feature>
<sequence>MNMSATLILAFGMSMDAFAASIGKGAVLHNPRFRDAIRTGLIFGVIEAITPLIGWALGFFASQYILEWDHWVAFTLLLILGGRMVVEGFKGSSDCRCEKVKNHSLALLVCTAIATSLDAMAIGVGLAFLQVNILHTAMVIGCATMIMVTLGMMIGRYIGPILGKKAEVMGGLVLIGIGCNILYEHLGYAA</sequence>
<name>MNTP_PECCP</name>
<comment type="function">
    <text evidence="1">Probably functions as a manganese efflux pump.</text>
</comment>
<comment type="subcellular location">
    <subcellularLocation>
        <location evidence="1">Cell inner membrane</location>
        <topology evidence="1">Multi-pass membrane protein</topology>
    </subcellularLocation>
</comment>
<comment type="similarity">
    <text evidence="1">Belongs to the MntP (TC 9.B.29) family.</text>
</comment>